<proteinExistence type="inferred from homology"/>
<protein>
    <recommendedName>
        <fullName evidence="1">DNA-directed RNA polymerase subunit beta</fullName>
        <ecNumber evidence="1">2.7.7.6</ecNumber>
    </recommendedName>
    <alternativeName>
        <fullName evidence="1">PEP</fullName>
    </alternativeName>
    <alternativeName>
        <fullName evidence="1">Plastid-encoded RNA polymerase subunit beta</fullName>
        <shortName evidence="1">RNA polymerase subunit beta</shortName>
    </alternativeName>
</protein>
<reference key="1">
    <citation type="journal article" date="1986" name="Nature">
        <title>Chloroplast gene organization deduced from complete sequence of liverwort Marchantia polymorpha chloroplast DNA.</title>
        <authorList>
            <person name="Ohyama K."/>
            <person name="Fukuzawa H."/>
            <person name="Kohchi T."/>
            <person name="Shirai H."/>
            <person name="Sano T."/>
            <person name="Sano S."/>
            <person name="Umesono K."/>
            <person name="Shiki Y."/>
            <person name="Takeuchi M."/>
            <person name="Chang Z."/>
            <person name="Aota S."/>
            <person name="Inokuchi H."/>
            <person name="Ozeki H."/>
        </authorList>
    </citation>
    <scope>NUCLEOTIDE SEQUENCE [LARGE SCALE GENOMIC DNA]</scope>
</reference>
<reference key="2">
    <citation type="journal article" date="1988" name="J. Mol. Biol.">
        <title>Structure and organization of Marchantia polymorpha chloroplast genome. II. Gene organization of the large single copy region from rps'12 to atpB.</title>
        <authorList>
            <person name="Umesono K."/>
            <person name="Inokuchi H."/>
            <person name="Shiki Y."/>
            <person name="Takeuchi M."/>
            <person name="Chang Z."/>
            <person name="Fukuzawa H."/>
            <person name="Kohchi T."/>
            <person name="Shirai H."/>
            <person name="Ohyama K."/>
            <person name="Ozeki H."/>
        </authorList>
    </citation>
    <scope>NUCLEOTIDE SEQUENCE [GENOMIC DNA]</scope>
</reference>
<evidence type="ECO:0000255" key="1">
    <source>
        <dbReference type="HAMAP-Rule" id="MF_01321"/>
    </source>
</evidence>
<accession>P06272</accession>
<dbReference type="EC" id="2.7.7.6" evidence="1"/>
<dbReference type="EMBL" id="X04465">
    <property type="protein sequence ID" value="CAA28061.1"/>
    <property type="molecule type" value="Genomic_DNA"/>
</dbReference>
<dbReference type="PIR" id="A00691">
    <property type="entry name" value="RNLVB"/>
</dbReference>
<dbReference type="RefSeq" id="NP_039275.1">
    <property type="nucleotide sequence ID" value="NC_001319.1"/>
</dbReference>
<dbReference type="SMR" id="P06272"/>
<dbReference type="GeneID" id="2702533"/>
<dbReference type="GO" id="GO:0009507">
    <property type="term" value="C:chloroplast"/>
    <property type="evidence" value="ECO:0007669"/>
    <property type="project" value="UniProtKB-SubCell"/>
</dbReference>
<dbReference type="GO" id="GO:0000428">
    <property type="term" value="C:DNA-directed RNA polymerase complex"/>
    <property type="evidence" value="ECO:0007669"/>
    <property type="project" value="UniProtKB-KW"/>
</dbReference>
<dbReference type="GO" id="GO:0005739">
    <property type="term" value="C:mitochondrion"/>
    <property type="evidence" value="ECO:0007669"/>
    <property type="project" value="GOC"/>
</dbReference>
<dbReference type="GO" id="GO:0003677">
    <property type="term" value="F:DNA binding"/>
    <property type="evidence" value="ECO:0007669"/>
    <property type="project" value="UniProtKB-UniRule"/>
</dbReference>
<dbReference type="GO" id="GO:0003899">
    <property type="term" value="F:DNA-directed RNA polymerase activity"/>
    <property type="evidence" value="ECO:0007669"/>
    <property type="project" value="UniProtKB-UniRule"/>
</dbReference>
<dbReference type="GO" id="GO:0032549">
    <property type="term" value="F:ribonucleoside binding"/>
    <property type="evidence" value="ECO:0007669"/>
    <property type="project" value="InterPro"/>
</dbReference>
<dbReference type="GO" id="GO:0006351">
    <property type="term" value="P:DNA-templated transcription"/>
    <property type="evidence" value="ECO:0007669"/>
    <property type="project" value="UniProtKB-UniRule"/>
</dbReference>
<dbReference type="CDD" id="cd00653">
    <property type="entry name" value="RNA_pol_B_RPB2"/>
    <property type="match status" value="1"/>
</dbReference>
<dbReference type="Gene3D" id="2.40.50.100">
    <property type="match status" value="1"/>
</dbReference>
<dbReference type="Gene3D" id="2.40.50.150">
    <property type="match status" value="1"/>
</dbReference>
<dbReference type="Gene3D" id="3.90.1100.10">
    <property type="match status" value="1"/>
</dbReference>
<dbReference type="Gene3D" id="2.30.150.10">
    <property type="entry name" value="DNA-directed RNA polymerase, beta subunit, external 1 domain"/>
    <property type="match status" value="1"/>
</dbReference>
<dbReference type="Gene3D" id="2.40.270.10">
    <property type="entry name" value="DNA-directed RNA polymerase, subunit 2, domain 6"/>
    <property type="match status" value="1"/>
</dbReference>
<dbReference type="Gene3D" id="3.90.1800.10">
    <property type="entry name" value="RNA polymerase alpha subunit dimerisation domain"/>
    <property type="match status" value="1"/>
</dbReference>
<dbReference type="Gene3D" id="3.90.1110.10">
    <property type="entry name" value="RNA polymerase Rpb2, domain 2"/>
    <property type="match status" value="1"/>
</dbReference>
<dbReference type="HAMAP" id="MF_01321">
    <property type="entry name" value="RNApol_bact_RpoB"/>
    <property type="match status" value="1"/>
</dbReference>
<dbReference type="InterPro" id="IPR042107">
    <property type="entry name" value="DNA-dir_RNA_pol_bsu_ext_1_sf"/>
</dbReference>
<dbReference type="InterPro" id="IPR015712">
    <property type="entry name" value="DNA-dir_RNA_pol_su2"/>
</dbReference>
<dbReference type="InterPro" id="IPR007120">
    <property type="entry name" value="DNA-dir_RNAP_su2_dom"/>
</dbReference>
<dbReference type="InterPro" id="IPR037033">
    <property type="entry name" value="DNA-dir_RNAP_su2_hyb_sf"/>
</dbReference>
<dbReference type="InterPro" id="IPR010243">
    <property type="entry name" value="RNA_pol_bsu_bac"/>
</dbReference>
<dbReference type="InterPro" id="IPR007121">
    <property type="entry name" value="RNA_pol_bsu_CS"/>
</dbReference>
<dbReference type="InterPro" id="IPR007644">
    <property type="entry name" value="RNA_pol_bsu_protrusion"/>
</dbReference>
<dbReference type="InterPro" id="IPR007642">
    <property type="entry name" value="RNA_pol_Rpb2_2"/>
</dbReference>
<dbReference type="InterPro" id="IPR037034">
    <property type="entry name" value="RNA_pol_Rpb2_2_sf"/>
</dbReference>
<dbReference type="InterPro" id="IPR007645">
    <property type="entry name" value="RNA_pol_Rpb2_3"/>
</dbReference>
<dbReference type="InterPro" id="IPR007641">
    <property type="entry name" value="RNA_pol_Rpb2_7"/>
</dbReference>
<dbReference type="InterPro" id="IPR014724">
    <property type="entry name" value="RNA_pol_RPB2_OB-fold"/>
</dbReference>
<dbReference type="NCBIfam" id="NF001616">
    <property type="entry name" value="PRK00405.1"/>
    <property type="match status" value="1"/>
</dbReference>
<dbReference type="PANTHER" id="PTHR20856">
    <property type="entry name" value="DNA-DIRECTED RNA POLYMERASE I SUBUNIT 2"/>
    <property type="match status" value="1"/>
</dbReference>
<dbReference type="Pfam" id="PF04563">
    <property type="entry name" value="RNA_pol_Rpb2_1"/>
    <property type="match status" value="1"/>
</dbReference>
<dbReference type="Pfam" id="PF04561">
    <property type="entry name" value="RNA_pol_Rpb2_2"/>
    <property type="match status" value="1"/>
</dbReference>
<dbReference type="Pfam" id="PF04565">
    <property type="entry name" value="RNA_pol_Rpb2_3"/>
    <property type="match status" value="1"/>
</dbReference>
<dbReference type="Pfam" id="PF00562">
    <property type="entry name" value="RNA_pol_Rpb2_6"/>
    <property type="match status" value="1"/>
</dbReference>
<dbReference type="Pfam" id="PF04560">
    <property type="entry name" value="RNA_pol_Rpb2_7"/>
    <property type="match status" value="1"/>
</dbReference>
<dbReference type="SUPFAM" id="SSF64484">
    <property type="entry name" value="beta and beta-prime subunits of DNA dependent RNA-polymerase"/>
    <property type="match status" value="1"/>
</dbReference>
<dbReference type="PROSITE" id="PS01166">
    <property type="entry name" value="RNA_POL_BETA"/>
    <property type="match status" value="1"/>
</dbReference>
<name>RPOB_MARPO</name>
<feature type="chain" id="PRO_0000048030" description="DNA-directed RNA polymerase subunit beta">
    <location>
        <begin position="1"/>
        <end position="1065"/>
    </location>
</feature>
<gene>
    <name evidence="1" type="primary">rpoB</name>
</gene>
<keyword id="KW-0150">Chloroplast</keyword>
<keyword id="KW-0240">DNA-directed RNA polymerase</keyword>
<keyword id="KW-0548">Nucleotidyltransferase</keyword>
<keyword id="KW-0934">Plastid</keyword>
<keyword id="KW-0804">Transcription</keyword>
<keyword id="KW-0808">Transferase</keyword>
<geneLocation type="chloroplast"/>
<sequence length="1065" mass="120447">MEIFILPEFGKIQFEGFNRFINQGLSEELSNFPIIEDIDQEFEFQIFGEQYKLAEPLLKERDAVYQSITYSSDVYVPAQLTQKKKGKIQKQIVFLGSIPLMNSQGTFVVNGVARVIINQILRSPGIYYNSELDHNGIPIYTGTLISNWGGRLKLEIDGKTRIWARISKKRKVSILVLLLAMGLNLQNILDSVCYPKIFLEFIKKNTKKEYPNSTEDAIVELYKHLYCIGGDLFFSESIRKELQKKFFQQRCELGKIGRLNLNKKLNLNVPENEIFVLPQDILAAVDYLIKLKFGIGTIDDIDHLKNRRVCSVADLLQDQLKLALNRLENSVLFFFRGATKRKRLPTPKSLVTSTPLIMTFKEFFGSHPLSQFLDQTNPLTEIVHKRRLSSLGPGGLTRRTASFQVRDIHASHYGRICPIETSEGMNAGLIASLAIHAKISILGCLESPFYKISKLSNLEEIINLSAAEDEYYRIATGNCLALDQNSQEEQITPARYRQDFVAIAWEQVHLRSIFPLQYFSVGASLIPFLEHNDANRALMGSNMQRQAVPLLKPEKCIVGTGIESQTALDSGSVTVSSHGGKIEYLDGNQIILSLKKKKIDKNLIIYQRSNNSTCMHQKPKVEKQKYIKKGQILADGAATANGELALGKNILVAYMPWEGYNFEDAILINERLIYEDIYTSIHIERYEIEARVTSQGPEKFTNEIPHLDDYLLRHLDQNGIVLTGSWVETGDVLVGKLTPQETEENLRAPEGKLLQAIFGIQVATSKETCLKVPPGGRGRVIDIRLISQEDNSANTAQIIHIYILQKRKIQIGDKVAGRHGNKGIISKILPRQDMPFLQDGTPIDMILSPLGVPSRMNVGQIFECLLGLAGSFLHKNYRIIPFDERYEREASRKLVFSELYKASKKTTNPWLFEPDNPGKNRLIDGRTGEIFEQPITIGKAYMLKLIHQVDDKIHARSSGPYALVTQQPLRGRSRRGGQRVGEMEVWALEGFGVAYILQEMLTIKSDHIRARYEVLGAIVTGEPIPKPNTAPESFKLLVRELRSLALEINHVIICEKNLKLKLKEI</sequence>
<organism>
    <name type="scientific">Marchantia polymorpha</name>
    <name type="common">Common liverwort</name>
    <name type="synonym">Marchantia aquatica</name>
    <dbReference type="NCBI Taxonomy" id="3197"/>
    <lineage>
        <taxon>Eukaryota</taxon>
        <taxon>Viridiplantae</taxon>
        <taxon>Streptophyta</taxon>
        <taxon>Embryophyta</taxon>
        <taxon>Marchantiophyta</taxon>
        <taxon>Marchantiopsida</taxon>
        <taxon>Marchantiidae</taxon>
        <taxon>Marchantiales</taxon>
        <taxon>Marchantiaceae</taxon>
        <taxon>Marchantia</taxon>
    </lineage>
</organism>
<comment type="function">
    <text evidence="1">DNA-dependent RNA polymerase catalyzes the transcription of DNA into RNA using the four ribonucleoside triphosphates as substrates.</text>
</comment>
<comment type="catalytic activity">
    <reaction evidence="1">
        <text>RNA(n) + a ribonucleoside 5'-triphosphate = RNA(n+1) + diphosphate</text>
        <dbReference type="Rhea" id="RHEA:21248"/>
        <dbReference type="Rhea" id="RHEA-COMP:14527"/>
        <dbReference type="Rhea" id="RHEA-COMP:17342"/>
        <dbReference type="ChEBI" id="CHEBI:33019"/>
        <dbReference type="ChEBI" id="CHEBI:61557"/>
        <dbReference type="ChEBI" id="CHEBI:140395"/>
        <dbReference type="EC" id="2.7.7.6"/>
    </reaction>
</comment>
<comment type="subunit">
    <text evidence="1">In plastids the minimal PEP RNA polymerase catalytic core is composed of four subunits: alpha, beta, beta', and beta''. When a (nuclear-encoded) sigma factor is associated with the core the holoenzyme is formed, which can initiate transcription.</text>
</comment>
<comment type="subcellular location">
    <subcellularLocation>
        <location>Plastid</location>
        <location>Chloroplast</location>
    </subcellularLocation>
</comment>
<comment type="similarity">
    <text evidence="1">Belongs to the RNA polymerase beta chain family.</text>
</comment>